<proteinExistence type="predicted"/>
<feature type="chain" id="PRO_0000248923" description="Uncharacterized protein YoaI">
    <location>
        <begin position="1"/>
        <end position="34"/>
    </location>
</feature>
<feature type="transmembrane region" description="Helical" evidence="1">
    <location>
        <begin position="10"/>
        <end position="30"/>
    </location>
</feature>
<organism>
    <name type="scientific">Escherichia coli (strain K12)</name>
    <dbReference type="NCBI Taxonomy" id="83333"/>
    <lineage>
        <taxon>Bacteria</taxon>
        <taxon>Pseudomonadati</taxon>
        <taxon>Pseudomonadota</taxon>
        <taxon>Gammaproteobacteria</taxon>
        <taxon>Enterobacterales</taxon>
        <taxon>Enterobacteriaceae</taxon>
        <taxon>Escherichia</taxon>
    </lineage>
</organism>
<accession>P76239</accession>
<accession>Q2MB29</accession>
<protein>
    <recommendedName>
        <fullName>Uncharacterized protein YoaI</fullName>
    </recommendedName>
</protein>
<reference key="1">
    <citation type="journal article" date="1997" name="Science">
        <title>The complete genome sequence of Escherichia coli K-12.</title>
        <authorList>
            <person name="Blattner F.R."/>
            <person name="Plunkett G. III"/>
            <person name="Bloch C.A."/>
            <person name="Perna N.T."/>
            <person name="Burland V."/>
            <person name="Riley M."/>
            <person name="Collado-Vides J."/>
            <person name="Glasner J.D."/>
            <person name="Rode C.K."/>
            <person name="Mayhew G.F."/>
            <person name="Gregor J."/>
            <person name="Davis N.W."/>
            <person name="Kirkpatrick H.A."/>
            <person name="Goeden M.A."/>
            <person name="Rose D.J."/>
            <person name="Mau B."/>
            <person name="Shao Y."/>
        </authorList>
    </citation>
    <scope>NUCLEOTIDE SEQUENCE [LARGE SCALE GENOMIC DNA]</scope>
    <source>
        <strain>K12 / MG1655 / ATCC 47076</strain>
    </source>
</reference>
<reference key="2">
    <citation type="journal article" date="2006" name="Mol. Syst. Biol.">
        <title>Highly accurate genome sequences of Escherichia coli K-12 strains MG1655 and W3110.</title>
        <authorList>
            <person name="Hayashi K."/>
            <person name="Morooka N."/>
            <person name="Yamamoto Y."/>
            <person name="Fujita K."/>
            <person name="Isono K."/>
            <person name="Choi S."/>
            <person name="Ohtsubo E."/>
            <person name="Baba T."/>
            <person name="Wanner B.L."/>
            <person name="Mori H."/>
            <person name="Horiuchi T."/>
        </authorList>
    </citation>
    <scope>NUCLEOTIDE SEQUENCE [LARGE SCALE GENOMIC DNA]</scope>
    <source>
        <strain>K12 / W3110 / ATCC 27325 / DSM 5911</strain>
    </source>
</reference>
<comment type="subcellular location">
    <subcellularLocation>
        <location evidence="2">Membrane</location>
        <topology evidence="2">Single-pass membrane protein</topology>
    </subcellularLocation>
</comment>
<keyword id="KW-0472">Membrane</keyword>
<keyword id="KW-1185">Reference proteome</keyword>
<keyword id="KW-0812">Transmembrane</keyword>
<keyword id="KW-1133">Transmembrane helix</keyword>
<name>YOAI_ECOLI</name>
<evidence type="ECO:0000255" key="1"/>
<evidence type="ECO:0000305" key="2"/>
<gene>
    <name type="primary">yoaI</name>
    <name type="ordered locus">b1788</name>
    <name type="ordered locus">JW5885</name>
</gene>
<dbReference type="EMBL" id="U00096">
    <property type="protein sequence ID" value="AAC74858.2"/>
    <property type="molecule type" value="Genomic_DNA"/>
</dbReference>
<dbReference type="EMBL" id="AP009048">
    <property type="protein sequence ID" value="BAE76527.1"/>
    <property type="molecule type" value="Genomic_DNA"/>
</dbReference>
<dbReference type="PIR" id="D64939">
    <property type="entry name" value="D64939"/>
</dbReference>
<dbReference type="RefSeq" id="NP_416302.2">
    <property type="nucleotide sequence ID" value="NC_000913.3"/>
</dbReference>
<dbReference type="RefSeq" id="WP_000999630.1">
    <property type="nucleotide sequence ID" value="NZ_STEB01000009.1"/>
</dbReference>
<dbReference type="SMR" id="P76239"/>
<dbReference type="STRING" id="511145.b1788"/>
<dbReference type="PaxDb" id="511145-b1788"/>
<dbReference type="EnsemblBacteria" id="AAC74858">
    <property type="protein sequence ID" value="AAC74858"/>
    <property type="gene ID" value="b1788"/>
</dbReference>
<dbReference type="GeneID" id="93776034"/>
<dbReference type="GeneID" id="946294"/>
<dbReference type="KEGG" id="ecj:JW5885"/>
<dbReference type="KEGG" id="eco:b1788"/>
<dbReference type="PATRIC" id="fig|511145.12.peg.1861"/>
<dbReference type="HOGENOM" id="CLU_216793_1_0_6"/>
<dbReference type="InParanoid" id="P76239"/>
<dbReference type="BioCyc" id="EcoCyc:G6974-MONOMER"/>
<dbReference type="PRO" id="PR:P76239"/>
<dbReference type="Proteomes" id="UP000000625">
    <property type="component" value="Chromosome"/>
</dbReference>
<dbReference type="GO" id="GO:0016020">
    <property type="term" value="C:membrane"/>
    <property type="evidence" value="ECO:0007669"/>
    <property type="project" value="UniProtKB-SubCell"/>
</dbReference>
<dbReference type="InterPro" id="IPR048191">
    <property type="entry name" value="YoaI-like"/>
</dbReference>
<dbReference type="NCBIfam" id="NF041475">
    <property type="entry name" value="membrane_YoaI"/>
    <property type="match status" value="1"/>
</dbReference>
<sequence>MNDQMFVETLIITSSFFAIAVVLVLSVLLIERTG</sequence>